<proteinExistence type="inferred from homology"/>
<dbReference type="EMBL" id="AP006878">
    <property type="protein sequence ID" value="BAD86222.1"/>
    <property type="molecule type" value="Genomic_DNA"/>
</dbReference>
<dbReference type="RefSeq" id="WP_011250983.1">
    <property type="nucleotide sequence ID" value="NC_006624.1"/>
</dbReference>
<dbReference type="SMR" id="Q5JDG5"/>
<dbReference type="STRING" id="69014.TK2033"/>
<dbReference type="EnsemblBacteria" id="BAD86222">
    <property type="protein sequence ID" value="BAD86222"/>
    <property type="gene ID" value="TK2033"/>
</dbReference>
<dbReference type="GeneID" id="78448568"/>
<dbReference type="KEGG" id="tko:TK2033"/>
<dbReference type="PATRIC" id="fig|69014.16.peg.1987"/>
<dbReference type="eggNOG" id="arCOG00928">
    <property type="taxonomic scope" value="Archaea"/>
</dbReference>
<dbReference type="HOGENOM" id="CLU_095956_1_0_2"/>
<dbReference type="InParanoid" id="Q5JDG5"/>
<dbReference type="OrthoDB" id="15207at2157"/>
<dbReference type="PhylomeDB" id="Q5JDG5"/>
<dbReference type="Proteomes" id="UP000000536">
    <property type="component" value="Chromosome"/>
</dbReference>
<dbReference type="Gene3D" id="3.30.2170.10">
    <property type="entry name" value="archaeoglobus fulgidus dsm 4304 superfamily"/>
    <property type="match status" value="1"/>
</dbReference>
<dbReference type="HAMAP" id="MF_00582">
    <property type="entry name" value="UPF0215"/>
    <property type="match status" value="1"/>
</dbReference>
<dbReference type="InterPro" id="IPR002802">
    <property type="entry name" value="Endo_dU"/>
</dbReference>
<dbReference type="NCBIfam" id="NF001977">
    <property type="entry name" value="PRK00766.1"/>
    <property type="match status" value="1"/>
</dbReference>
<dbReference type="PANTHER" id="PTHR39518">
    <property type="entry name" value="UPF0215 PROTEIN MJ1150"/>
    <property type="match status" value="1"/>
</dbReference>
<dbReference type="PANTHER" id="PTHR39518:SF2">
    <property type="entry name" value="UPF0215 PROTEIN MJ1150"/>
    <property type="match status" value="1"/>
</dbReference>
<dbReference type="Pfam" id="PF01949">
    <property type="entry name" value="DUF99"/>
    <property type="match status" value="1"/>
</dbReference>
<dbReference type="PIRSF" id="PIRSF006380">
    <property type="entry name" value="UCP006380"/>
    <property type="match status" value="1"/>
</dbReference>
<accession>Q5JDG5</accession>
<comment type="similarity">
    <text evidence="1">Belongs to the UPF0215 family.</text>
</comment>
<keyword id="KW-1185">Reference proteome</keyword>
<evidence type="ECO:0000255" key="1">
    <source>
        <dbReference type="HAMAP-Rule" id="MF_00582"/>
    </source>
</evidence>
<reference key="1">
    <citation type="journal article" date="2005" name="Genome Res.">
        <title>Complete genome sequence of the hyperthermophilic archaeon Thermococcus kodakaraensis KOD1 and comparison with Pyrococcus genomes.</title>
        <authorList>
            <person name="Fukui T."/>
            <person name="Atomi H."/>
            <person name="Kanai T."/>
            <person name="Matsumi R."/>
            <person name="Fujiwara S."/>
            <person name="Imanaka T."/>
        </authorList>
    </citation>
    <scope>NUCLEOTIDE SEQUENCE [LARGE SCALE GENOMIC DNA]</scope>
    <source>
        <strain>ATCC BAA-918 / JCM 12380 / KOD1</strain>
    </source>
</reference>
<feature type="chain" id="PRO_0000149243" description="UPF0215 protein TK2033">
    <location>
        <begin position="1"/>
        <end position="195"/>
    </location>
</feature>
<protein>
    <recommendedName>
        <fullName evidence="1">UPF0215 protein TK2033</fullName>
    </recommendedName>
</protein>
<name>Y2033_THEKO</name>
<gene>
    <name type="ordered locus">TK2033</name>
</gene>
<sequence>MIRKVKPQIRVLGFDDGTFSFSSKLKHEKTILIGVVMKGSLEVVGVLSRWITVDGRDVTDAMINSVNSSRFKDLRVILLKGITYAGFNVVDLERLHNETGLPVVVVVRKKPDILAMEDALRKHFRDAEERIALLRKTPPLVELVPDKLYFQTVGLDEKTAAEVIKVTTRTGFIPEPLRLAHMIASAVMTGESKRE</sequence>
<organism>
    <name type="scientific">Thermococcus kodakarensis (strain ATCC BAA-918 / JCM 12380 / KOD1)</name>
    <name type="common">Pyrococcus kodakaraensis (strain KOD1)</name>
    <dbReference type="NCBI Taxonomy" id="69014"/>
    <lineage>
        <taxon>Archaea</taxon>
        <taxon>Methanobacteriati</taxon>
        <taxon>Methanobacteriota</taxon>
        <taxon>Thermococci</taxon>
        <taxon>Thermococcales</taxon>
        <taxon>Thermococcaceae</taxon>
        <taxon>Thermococcus</taxon>
    </lineage>
</organism>